<name>ATG8_ASPOR</name>
<accession>Q2UBH5</accession>
<feature type="chain" id="PRO_0000317878" description="Autophagy-related protein 8">
    <location>
        <begin position="1"/>
        <end position="116"/>
    </location>
</feature>
<feature type="propeptide" id="PRO_0000317879" description="Removed in mature form" evidence="1">
    <location>
        <begin position="117"/>
        <end position="118"/>
    </location>
</feature>
<feature type="site" description="Cleavage; by atg4" evidence="1">
    <location>
        <begin position="116"/>
        <end position="117"/>
    </location>
</feature>
<feature type="lipid moiety-binding region" description="Phosphatidylethanolamine amidated glycine" evidence="1">
    <location>
        <position position="116"/>
    </location>
</feature>
<comment type="function">
    <text evidence="1 2">Ubiquitin-like modifier involved in autophagosome formation (By similarity). The atg8-PE conjugate mediates tethering between adjacent membranes and stimulates membrane hemifusion, leading to expansion of the autophagosomal membrane during autophagy (By similarity). With atg4, mediates the delivery of the autophagosomes to the vacuole via the microtubule cytoskeleton (By similarity). Required for selective autophagic degradation of the nucleus (nucleophagy) as well as for mitophagy which contributes to regulate mitochondrial quantity and quality by eliminating the mitochondria to a basal level to fulfill cellular energy requirements and preventing excess ROS production (By similarity). Also participates in membrane fusion events that take place in the early secretory pathway (By similarity). Also involved in endoplasmic reticulum-specific autophagic process and is essential for the survival of cells subjected to severe ER stress (By similarity). Required for both the differentiation of aerial hyphae and conidial germination (PubMed:16896216).</text>
</comment>
<comment type="subcellular location">
    <subcellularLocation>
        <location evidence="2 3">Cytoplasmic vesicle</location>
        <location evidence="2 3">Autophagosome membrane</location>
        <topology evidence="2">Lipid-anchor</topology>
    </subcellularLocation>
    <subcellularLocation>
        <location evidence="1 3">Vacuole membrane</location>
        <topology evidence="1">Lipid-anchor</topology>
    </subcellularLocation>
    <subcellularLocation>
        <location evidence="2">Lipid droplet</location>
    </subcellularLocation>
</comment>
<comment type="PTM">
    <text evidence="1">The C-terminal 2 residues are removed by atg4 to expose Gly-116 at the C-terminus. The c-terminal Gly is then amidated with phosphatidylethanolamine by an activating system similar to that for ubiquitin.</text>
</comment>
<comment type="disruption phenotype">
    <text evidence="2">Impairs autophagy as well as the formation of aerial hyphae and conidia.</text>
</comment>
<comment type="similarity">
    <text evidence="5">Belongs to the ATG8 family.</text>
</comment>
<evidence type="ECO:0000250" key="1">
    <source>
        <dbReference type="UniProtKB" id="P38182"/>
    </source>
</evidence>
<evidence type="ECO:0000269" key="2">
    <source>
    </source>
</evidence>
<evidence type="ECO:0000269" key="3">
    <source>
    </source>
</evidence>
<evidence type="ECO:0000303" key="4">
    <source>
    </source>
</evidence>
<evidence type="ECO:0000305" key="5"/>
<protein>
    <recommendedName>
        <fullName evidence="4">Autophagy-related protein 8</fullName>
    </recommendedName>
    <alternativeName>
        <fullName evidence="4">Autophagy-related ubiquitin-like modifier atg8</fullName>
    </alternativeName>
</protein>
<keyword id="KW-0072">Autophagy</keyword>
<keyword id="KW-0968">Cytoplasmic vesicle</keyword>
<keyword id="KW-0551">Lipid droplet</keyword>
<keyword id="KW-0449">Lipoprotein</keyword>
<keyword id="KW-0472">Membrane</keyword>
<keyword id="KW-0653">Protein transport</keyword>
<keyword id="KW-1185">Reference proteome</keyword>
<keyword id="KW-0813">Transport</keyword>
<keyword id="KW-0833">Ubl conjugation pathway</keyword>
<keyword id="KW-0926">Vacuole</keyword>
<proteinExistence type="inferred from homology"/>
<dbReference type="EMBL" id="AB246664">
    <property type="protein sequence ID" value="BAE93233.1"/>
    <property type="molecule type" value="Genomic_DNA"/>
</dbReference>
<dbReference type="EMBL" id="BA000052">
    <property type="protein sequence ID" value="BAE61090.1"/>
    <property type="molecule type" value="Genomic_DNA"/>
</dbReference>
<dbReference type="RefSeq" id="XP_001727929.1">
    <property type="nucleotide sequence ID" value="XM_001727877.2"/>
</dbReference>
<dbReference type="SMR" id="Q2UBH5"/>
<dbReference type="STRING" id="510516.Q2UBH5"/>
<dbReference type="EnsemblFungi" id="BAE61090">
    <property type="protein sequence ID" value="BAE61090"/>
    <property type="gene ID" value="AO090012000997"/>
</dbReference>
<dbReference type="GeneID" id="5988403"/>
<dbReference type="KEGG" id="aor:AO090012000997"/>
<dbReference type="VEuPathDB" id="FungiDB:AO090012000997"/>
<dbReference type="HOGENOM" id="CLU_119276_0_1_1"/>
<dbReference type="OMA" id="AVYQEHK"/>
<dbReference type="OrthoDB" id="16824at5052"/>
<dbReference type="Proteomes" id="UP000006564">
    <property type="component" value="Chromosome 4"/>
</dbReference>
<dbReference type="GO" id="GO:0005776">
    <property type="term" value="C:autophagosome"/>
    <property type="evidence" value="ECO:0000314"/>
    <property type="project" value="AspGD"/>
</dbReference>
<dbReference type="GO" id="GO:0000421">
    <property type="term" value="C:autophagosome membrane"/>
    <property type="evidence" value="ECO:0007669"/>
    <property type="project" value="UniProtKB-SubCell"/>
</dbReference>
<dbReference type="GO" id="GO:0005737">
    <property type="term" value="C:cytoplasm"/>
    <property type="evidence" value="ECO:0000314"/>
    <property type="project" value="AspGD"/>
</dbReference>
<dbReference type="GO" id="GO:0031410">
    <property type="term" value="C:cytoplasmic vesicle"/>
    <property type="evidence" value="ECO:0007669"/>
    <property type="project" value="UniProtKB-KW"/>
</dbReference>
<dbReference type="GO" id="GO:0000324">
    <property type="term" value="C:fungal-type vacuole"/>
    <property type="evidence" value="ECO:0000314"/>
    <property type="project" value="AspGD"/>
</dbReference>
<dbReference type="GO" id="GO:0005811">
    <property type="term" value="C:lipid droplet"/>
    <property type="evidence" value="ECO:0007669"/>
    <property type="project" value="UniProtKB-SubCell"/>
</dbReference>
<dbReference type="GO" id="GO:0000407">
    <property type="term" value="C:phagophore assembly site"/>
    <property type="evidence" value="ECO:0000314"/>
    <property type="project" value="AspGD"/>
</dbReference>
<dbReference type="GO" id="GO:0043936">
    <property type="term" value="P:asexual sporulation resulting in formation of a cellular spore"/>
    <property type="evidence" value="ECO:0000315"/>
    <property type="project" value="AspGD"/>
</dbReference>
<dbReference type="GO" id="GO:0006914">
    <property type="term" value="P:autophagy"/>
    <property type="evidence" value="ECO:0000315"/>
    <property type="project" value="AspGD"/>
</dbReference>
<dbReference type="GO" id="GO:0009306">
    <property type="term" value="P:protein secretion"/>
    <property type="evidence" value="ECO:0000315"/>
    <property type="project" value="AspGD"/>
</dbReference>
<dbReference type="CDD" id="cd16128">
    <property type="entry name" value="Ubl_ATG8"/>
    <property type="match status" value="1"/>
</dbReference>
<dbReference type="FunFam" id="3.10.20.90:FF:000010">
    <property type="entry name" value="Autophagy-related protein"/>
    <property type="match status" value="1"/>
</dbReference>
<dbReference type="Gene3D" id="3.10.20.90">
    <property type="entry name" value="Phosphatidylinositol 3-kinase Catalytic Subunit, Chain A, domain 1"/>
    <property type="match status" value="1"/>
</dbReference>
<dbReference type="InterPro" id="IPR004241">
    <property type="entry name" value="Atg8-like"/>
</dbReference>
<dbReference type="InterPro" id="IPR029071">
    <property type="entry name" value="Ubiquitin-like_domsf"/>
</dbReference>
<dbReference type="PANTHER" id="PTHR10969">
    <property type="entry name" value="MICROTUBULE-ASSOCIATED PROTEINS 1A/1B LIGHT CHAIN 3-RELATED"/>
    <property type="match status" value="1"/>
</dbReference>
<dbReference type="Pfam" id="PF02991">
    <property type="entry name" value="ATG8"/>
    <property type="match status" value="1"/>
</dbReference>
<dbReference type="SUPFAM" id="SSF54236">
    <property type="entry name" value="Ubiquitin-like"/>
    <property type="match status" value="1"/>
</dbReference>
<gene>
    <name type="primary">atg8</name>
    <name type="ORF">AO090012000997</name>
</gene>
<organism>
    <name type="scientific">Aspergillus oryzae (strain ATCC 42149 / RIB 40)</name>
    <name type="common">Yellow koji mold</name>
    <dbReference type="NCBI Taxonomy" id="510516"/>
    <lineage>
        <taxon>Eukaryota</taxon>
        <taxon>Fungi</taxon>
        <taxon>Dikarya</taxon>
        <taxon>Ascomycota</taxon>
        <taxon>Pezizomycotina</taxon>
        <taxon>Eurotiomycetes</taxon>
        <taxon>Eurotiomycetidae</taxon>
        <taxon>Eurotiales</taxon>
        <taxon>Aspergillaceae</taxon>
        <taxon>Aspergillus</taxon>
        <taxon>Aspergillus subgen. Circumdati</taxon>
    </lineage>
</organism>
<sequence>MRSKFKDEHPFEKRKAEAERIRQKYADRIPVICEKVEKSDIATIDKKKYLVPADLTVGQFVYVIRKRIKLSPEKAIFIFVDEVLPPTAALMSSIYEEHKDEDGFLYITYSGENTFGDL</sequence>
<reference key="1">
    <citation type="journal article" date="2006" name="Eukaryot. Cell">
        <title>Functional analysis of the ATG8 homologue Aoatg8 and role of autophagy in differentiation and germination in Aspergillus oryzae.</title>
        <authorList>
            <person name="Kikuma T."/>
            <person name="Ohneda M."/>
            <person name="Arioka M."/>
            <person name="Kitamoto K."/>
        </authorList>
    </citation>
    <scope>NUCLEOTIDE SEQUENCE [GENOMIC DNA]</scope>
    <scope>FUNCTION</scope>
    <scope>DISRUPTION PHENOTYPE</scope>
    <scope>SUBCELLULAR LOCATION</scope>
    <source>
        <strain>ATCC 42149 / RIB 40</strain>
    </source>
</reference>
<reference key="2">
    <citation type="journal article" date="2005" name="Nature">
        <title>Genome sequencing and analysis of Aspergillus oryzae.</title>
        <authorList>
            <person name="Machida M."/>
            <person name="Asai K."/>
            <person name="Sano M."/>
            <person name="Tanaka T."/>
            <person name="Kumagai T."/>
            <person name="Terai G."/>
            <person name="Kusumoto K."/>
            <person name="Arima T."/>
            <person name="Akita O."/>
            <person name="Kashiwagi Y."/>
            <person name="Abe K."/>
            <person name="Gomi K."/>
            <person name="Horiuchi H."/>
            <person name="Kitamoto K."/>
            <person name="Kobayashi T."/>
            <person name="Takeuchi M."/>
            <person name="Denning D.W."/>
            <person name="Galagan J.E."/>
            <person name="Nierman W.C."/>
            <person name="Yu J."/>
            <person name="Archer D.B."/>
            <person name="Bennett J.W."/>
            <person name="Bhatnagar D."/>
            <person name="Cleveland T.E."/>
            <person name="Fedorova N.D."/>
            <person name="Gotoh O."/>
            <person name="Horikawa H."/>
            <person name="Hosoyama A."/>
            <person name="Ichinomiya M."/>
            <person name="Igarashi R."/>
            <person name="Iwashita K."/>
            <person name="Juvvadi P.R."/>
            <person name="Kato M."/>
            <person name="Kato Y."/>
            <person name="Kin T."/>
            <person name="Kokubun A."/>
            <person name="Maeda H."/>
            <person name="Maeyama N."/>
            <person name="Maruyama J."/>
            <person name="Nagasaki H."/>
            <person name="Nakajima T."/>
            <person name="Oda K."/>
            <person name="Okada K."/>
            <person name="Paulsen I."/>
            <person name="Sakamoto K."/>
            <person name="Sawano T."/>
            <person name="Takahashi M."/>
            <person name="Takase K."/>
            <person name="Terabayashi Y."/>
            <person name="Wortman J.R."/>
            <person name="Yamada O."/>
            <person name="Yamagata Y."/>
            <person name="Anazawa H."/>
            <person name="Hata Y."/>
            <person name="Koide Y."/>
            <person name="Komori T."/>
            <person name="Koyama Y."/>
            <person name="Minetoki T."/>
            <person name="Suharnan S."/>
            <person name="Tanaka A."/>
            <person name="Isono K."/>
            <person name="Kuhara S."/>
            <person name="Ogasawara N."/>
            <person name="Kikuchi H."/>
        </authorList>
    </citation>
    <scope>NUCLEOTIDE SEQUENCE [LARGE SCALE GENOMIC DNA]</scope>
    <source>
        <strain>ATCC 42149 / RIB 40</strain>
    </source>
</reference>
<reference key="3">
    <citation type="journal article" date="2011" name="FEMS Microbiol. Lett.">
        <title>Analysis of autophagy in Aspergillus oryzae by disruption of Aoatg13, Aoatg4, and Aoatg15 genes.</title>
        <authorList>
            <person name="Kikuma T."/>
            <person name="Kitamoto K."/>
        </authorList>
    </citation>
    <scope>SUBCELLULAR LOCATION</scope>
    <source>
        <strain>ATCC 42149 / RIB 40</strain>
    </source>
</reference>